<accession>O59866</accession>
<accession>Q7LWC1</accession>
<proteinExistence type="evidence at transcript level"/>
<dbReference type="EMBL" id="CU329672">
    <property type="protein sequence ID" value="CAA19346.1"/>
    <property type="molecule type" value="Genomic_DNA"/>
</dbReference>
<dbReference type="EMBL" id="AB015170">
    <property type="protein sequence ID" value="BAA28753.1"/>
    <property type="molecule type" value="mRNA"/>
</dbReference>
<dbReference type="PIR" id="T41728">
    <property type="entry name" value="T41728"/>
</dbReference>
<dbReference type="PIR" id="T43367">
    <property type="entry name" value="T43367"/>
</dbReference>
<dbReference type="RefSeq" id="NP_588153.1">
    <property type="nucleotide sequence ID" value="NM_001023142.2"/>
</dbReference>
<dbReference type="SMR" id="O59866"/>
<dbReference type="BioGRID" id="276082">
    <property type="interactions" value="4"/>
</dbReference>
<dbReference type="ComplexPortal" id="CPX-10061">
    <property type="entry name" value="Oligosaccharyltransferase complex"/>
</dbReference>
<dbReference type="FunCoup" id="O59866">
    <property type="interactions" value="621"/>
</dbReference>
<dbReference type="STRING" id="284812.O59866"/>
<dbReference type="GlyCosmos" id="O59866">
    <property type="glycosylation" value="2 sites, No reported glycans"/>
</dbReference>
<dbReference type="iPTMnet" id="O59866"/>
<dbReference type="PaxDb" id="4896-SPCC338.15.1"/>
<dbReference type="EnsemblFungi" id="SPCC338.15.1">
    <property type="protein sequence ID" value="SPCC338.15.1:pep"/>
    <property type="gene ID" value="SPCC338.15"/>
</dbReference>
<dbReference type="GeneID" id="2539520"/>
<dbReference type="KEGG" id="spo:2539520"/>
<dbReference type="PomBase" id="SPCC338.15">
    <property type="gene designation" value="wbp1"/>
</dbReference>
<dbReference type="VEuPathDB" id="FungiDB:SPCC338.15"/>
<dbReference type="eggNOG" id="KOG2754">
    <property type="taxonomic scope" value="Eukaryota"/>
</dbReference>
<dbReference type="HOGENOM" id="CLU_031804_0_0_1"/>
<dbReference type="InParanoid" id="O59866"/>
<dbReference type="OMA" id="AHDEYPR"/>
<dbReference type="PhylomeDB" id="O59866"/>
<dbReference type="Reactome" id="R-SPO-6798695">
    <property type="pathway name" value="Neutrophil degranulation"/>
</dbReference>
<dbReference type="UniPathway" id="UPA00378"/>
<dbReference type="PRO" id="PR:O59866"/>
<dbReference type="Proteomes" id="UP000002485">
    <property type="component" value="Chromosome III"/>
</dbReference>
<dbReference type="GO" id="GO:0005783">
    <property type="term" value="C:endoplasmic reticulum"/>
    <property type="evidence" value="ECO:0007005"/>
    <property type="project" value="PomBase"/>
</dbReference>
<dbReference type="GO" id="GO:0008250">
    <property type="term" value="C:oligosaccharyltransferase complex"/>
    <property type="evidence" value="ECO:0000318"/>
    <property type="project" value="GO_Central"/>
</dbReference>
<dbReference type="GO" id="GO:0018279">
    <property type="term" value="P:protein N-linked glycosylation via asparagine"/>
    <property type="evidence" value="ECO:0000318"/>
    <property type="project" value="GO_Central"/>
</dbReference>
<dbReference type="InterPro" id="IPR029062">
    <property type="entry name" value="Class_I_gatase-like"/>
</dbReference>
<dbReference type="InterPro" id="IPR005013">
    <property type="entry name" value="DDOST_48_kDa_subunit"/>
</dbReference>
<dbReference type="InterPro" id="IPR055459">
    <property type="entry name" value="OST48_MD"/>
</dbReference>
<dbReference type="InterPro" id="IPR055457">
    <property type="entry name" value="OST48_N"/>
</dbReference>
<dbReference type="PANTHER" id="PTHR10830">
    <property type="entry name" value="DOLICHYL-DIPHOSPHOOLIGOSACCHARIDE--PROTEIN GLYCOSYLTRANSFERASE 48 KDA SUBUNIT"/>
    <property type="match status" value="1"/>
</dbReference>
<dbReference type="PANTHER" id="PTHR10830:SF0">
    <property type="entry name" value="DOLICHYL-DIPHOSPHOOLIGOSACCHARIDE--PROTEIN GLYCOSYLTRANSFERASE 48 KDA SUBUNIT"/>
    <property type="match status" value="1"/>
</dbReference>
<dbReference type="Pfam" id="PF23358">
    <property type="entry name" value="OST48_MD"/>
    <property type="match status" value="1"/>
</dbReference>
<dbReference type="Pfam" id="PF03345">
    <property type="entry name" value="OST48_N"/>
    <property type="match status" value="1"/>
</dbReference>
<dbReference type="SUPFAM" id="SSF52317">
    <property type="entry name" value="Class I glutamine amidotransferase-like"/>
    <property type="match status" value="1"/>
</dbReference>
<evidence type="ECO:0000250" key="1">
    <source>
        <dbReference type="UniProtKB" id="P33767"/>
    </source>
</evidence>
<evidence type="ECO:0000255" key="2"/>
<evidence type="ECO:0000269" key="3">
    <source>
    </source>
</evidence>
<evidence type="ECO:0000305" key="4"/>
<evidence type="ECO:0000312" key="5">
    <source>
        <dbReference type="EMBL" id="BAA28753.1"/>
    </source>
</evidence>
<evidence type="ECO:0000312" key="6">
    <source>
        <dbReference type="EMBL" id="CAA19346.1"/>
    </source>
</evidence>
<reference evidence="6" key="1">
    <citation type="journal article" date="2002" name="Nature">
        <title>The genome sequence of Schizosaccharomyces pombe.</title>
        <authorList>
            <person name="Wood V."/>
            <person name="Gwilliam R."/>
            <person name="Rajandream M.A."/>
            <person name="Lyne M.H."/>
            <person name="Lyne R."/>
            <person name="Stewart A."/>
            <person name="Sgouros J.G."/>
            <person name="Peat N."/>
            <person name="Hayles J."/>
            <person name="Baker S.G."/>
            <person name="Basham D."/>
            <person name="Bowman S."/>
            <person name="Brooks K."/>
            <person name="Brown D."/>
            <person name="Brown S."/>
            <person name="Chillingworth T."/>
            <person name="Churcher C.M."/>
            <person name="Collins M."/>
            <person name="Connor R."/>
            <person name="Cronin A."/>
            <person name="Davis P."/>
            <person name="Feltwell T."/>
            <person name="Fraser A."/>
            <person name="Gentles S."/>
            <person name="Goble A."/>
            <person name="Hamlin N."/>
            <person name="Harris D.E."/>
            <person name="Hidalgo J."/>
            <person name="Hodgson G."/>
            <person name="Holroyd S."/>
            <person name="Hornsby T."/>
            <person name="Howarth S."/>
            <person name="Huckle E.J."/>
            <person name="Hunt S."/>
            <person name="Jagels K."/>
            <person name="James K.D."/>
            <person name="Jones L."/>
            <person name="Jones M."/>
            <person name="Leather S."/>
            <person name="McDonald S."/>
            <person name="McLean J."/>
            <person name="Mooney P."/>
            <person name="Moule S."/>
            <person name="Mungall K.L."/>
            <person name="Murphy L.D."/>
            <person name="Niblett D."/>
            <person name="Odell C."/>
            <person name="Oliver K."/>
            <person name="O'Neil S."/>
            <person name="Pearson D."/>
            <person name="Quail M.A."/>
            <person name="Rabbinowitsch E."/>
            <person name="Rutherford K.M."/>
            <person name="Rutter S."/>
            <person name="Saunders D."/>
            <person name="Seeger K."/>
            <person name="Sharp S."/>
            <person name="Skelton J."/>
            <person name="Simmonds M.N."/>
            <person name="Squares R."/>
            <person name="Squares S."/>
            <person name="Stevens K."/>
            <person name="Taylor K."/>
            <person name="Taylor R.G."/>
            <person name="Tivey A."/>
            <person name="Walsh S.V."/>
            <person name="Warren T."/>
            <person name="Whitehead S."/>
            <person name="Woodward J.R."/>
            <person name="Volckaert G."/>
            <person name="Aert R."/>
            <person name="Robben J."/>
            <person name="Grymonprez B."/>
            <person name="Weltjens I."/>
            <person name="Vanstreels E."/>
            <person name="Rieger M."/>
            <person name="Schaefer M."/>
            <person name="Mueller-Auer S."/>
            <person name="Gabel C."/>
            <person name="Fuchs M."/>
            <person name="Duesterhoeft A."/>
            <person name="Fritzc C."/>
            <person name="Holzer E."/>
            <person name="Moestl D."/>
            <person name="Hilbert H."/>
            <person name="Borzym K."/>
            <person name="Langer I."/>
            <person name="Beck A."/>
            <person name="Lehrach H."/>
            <person name="Reinhardt R."/>
            <person name="Pohl T.M."/>
            <person name="Eger P."/>
            <person name="Zimmermann W."/>
            <person name="Wedler H."/>
            <person name="Wambutt R."/>
            <person name="Purnelle B."/>
            <person name="Goffeau A."/>
            <person name="Cadieu E."/>
            <person name="Dreano S."/>
            <person name="Gloux S."/>
            <person name="Lelaure V."/>
            <person name="Mottier S."/>
            <person name="Galibert F."/>
            <person name="Aves S.J."/>
            <person name="Xiang Z."/>
            <person name="Hunt C."/>
            <person name="Moore K."/>
            <person name="Hurst S.M."/>
            <person name="Lucas M."/>
            <person name="Rochet M."/>
            <person name="Gaillardin C."/>
            <person name="Tallada V.A."/>
            <person name="Garzon A."/>
            <person name="Thode G."/>
            <person name="Daga R.R."/>
            <person name="Cruzado L."/>
            <person name="Jimenez J."/>
            <person name="Sanchez M."/>
            <person name="del Rey F."/>
            <person name="Benito J."/>
            <person name="Dominguez A."/>
            <person name="Revuelta J.L."/>
            <person name="Moreno S."/>
            <person name="Armstrong J."/>
            <person name="Forsburg S.L."/>
            <person name="Cerutti L."/>
            <person name="Lowe T."/>
            <person name="McCombie W.R."/>
            <person name="Paulsen I."/>
            <person name="Potashkin J."/>
            <person name="Shpakovski G.V."/>
            <person name="Ussery D."/>
            <person name="Barrell B.G."/>
            <person name="Nurse P."/>
        </authorList>
    </citation>
    <scope>NUCLEOTIDE SEQUENCE [LARGE SCALE GENOMIC DNA]</scope>
    <source>
        <strain>972 / ATCC 24843</strain>
    </source>
</reference>
<reference evidence="4 5" key="2">
    <citation type="submission" date="1998-06" db="EMBL/GenBank/DDBJ databases">
        <title>S. pombe oligosaccharyltransferase homolog.</title>
        <authorList>
            <person name="Kawamukai M."/>
        </authorList>
    </citation>
    <scope>NUCLEOTIDE SEQUENCE [MRNA] OF 304-437</scope>
</reference>
<reference evidence="4" key="3">
    <citation type="journal article" date="2006" name="Nat. Biotechnol.">
        <title>ORFeome cloning and global analysis of protein localization in the fission yeast Schizosaccharomyces pombe.</title>
        <authorList>
            <person name="Matsuyama A."/>
            <person name="Arai R."/>
            <person name="Yashiroda Y."/>
            <person name="Shirai A."/>
            <person name="Kamata A."/>
            <person name="Sekido S."/>
            <person name="Kobayashi Y."/>
            <person name="Hashimoto A."/>
            <person name="Hamamoto M."/>
            <person name="Hiraoka Y."/>
            <person name="Horinouchi S."/>
            <person name="Yoshida M."/>
        </authorList>
    </citation>
    <scope>SUBCELLULAR LOCATION [LARGE SCALE ANALYSIS]</scope>
</reference>
<gene>
    <name type="primary">wbp1</name>
    <name type="ORF">SPCC338.15</name>
</gene>
<organism>
    <name type="scientific">Schizosaccharomyces pombe (strain 972 / ATCC 24843)</name>
    <name type="common">Fission yeast</name>
    <dbReference type="NCBI Taxonomy" id="284812"/>
    <lineage>
        <taxon>Eukaryota</taxon>
        <taxon>Fungi</taxon>
        <taxon>Dikarya</taxon>
        <taxon>Ascomycota</taxon>
        <taxon>Taphrinomycotina</taxon>
        <taxon>Schizosaccharomycetes</taxon>
        <taxon>Schizosaccharomycetales</taxon>
        <taxon>Schizosaccharomycetaceae</taxon>
        <taxon>Schizosaccharomyces</taxon>
    </lineage>
</organism>
<feature type="signal peptide" evidence="2">
    <location>
        <begin position="1"/>
        <end position="19"/>
    </location>
</feature>
<feature type="chain" id="PRO_0000315923" description="Dolichyl-diphosphooligosaccharide--protein glycosyltransferase subunit wbp1">
    <location>
        <begin position="20"/>
        <end position="437"/>
    </location>
</feature>
<feature type="topological domain" description="Lumenal" evidence="1 2">
    <location>
        <begin position="20"/>
        <end position="401"/>
    </location>
</feature>
<feature type="transmembrane region" description="Helical" evidence="2">
    <location>
        <begin position="402"/>
        <end position="422"/>
    </location>
</feature>
<feature type="topological domain" description="Cytoplasmic" evidence="1 2">
    <location>
        <begin position="423"/>
        <end position="437"/>
    </location>
</feature>
<feature type="glycosylation site" description="N-linked (GlcNAc...) asparagine" evidence="2">
    <location>
        <position position="275"/>
    </location>
</feature>
<feature type="glycosylation site" description="N-linked (GlcNAc...) asparagine" evidence="2">
    <location>
        <position position="289"/>
    </location>
</feature>
<sequence>MKSALCIALALTWSLLVQAARQTVLAVADHDIGGYSTFLQSLTDRDFDVKTSYIKDESAKLFEYGERLYDNLILLSSQSKSLGPVFSPKSLLEFVQSGGNLFVVAGSQLPEGIRELGRQLDMFLAERQSVVVDHFNHAEGSDDIILLDGISENPYIISDETRAAGPILYKGIGHYLGPNPQTQPILRGNPTSYIYNTKTEAEVSKNPWAAGTQLFLVSVLQSSTGERVGLSGSIDMLKDEYLSPQSPSFSKSNFLFARDLTNWVFQRKGVLQATNMTYGKVAEPLESRNASCYRIKDEMIFSIDISLLEDGQQTPYVADDVQLELIMLDPYYRVNLVPVPSDSQTSQHYEAVLVAPDHYGDFTFKIEYKRPGLTPIEEKSTFTLRQFFHNEFPRFLPHAYPYYASCFSVLGAFLLFCGIWLLQKPAKPVVPSAKKQN</sequence>
<keyword id="KW-0256">Endoplasmic reticulum</keyword>
<keyword id="KW-0325">Glycoprotein</keyword>
<keyword id="KW-0472">Membrane</keyword>
<keyword id="KW-1185">Reference proteome</keyword>
<keyword id="KW-0732">Signal</keyword>
<keyword id="KW-0812">Transmembrane</keyword>
<keyword id="KW-1133">Transmembrane helix</keyword>
<protein>
    <recommendedName>
        <fullName>Dolichyl-diphosphooligosaccharide--protein glycosyltransferase subunit wbp1</fullName>
        <shortName>Oligosaccharyl transferase 48 kDa subunit</shortName>
    </recommendedName>
    <alternativeName>
        <fullName>Oligosaccharyl transferase subunit beta</fullName>
    </alternativeName>
</protein>
<name>OSTB_SCHPO</name>
<comment type="function">
    <text evidence="1">Subunit of the oligosaccharyl transferase (OST) complex that catalyzes the initial transfer of a defined glycan (Glc(3)Man(9)GlcNAc(2) in eukaryotes) from the lipid carrier dolichol-pyrophosphate to an asparagine residue within an Asn-X-Ser/Thr consensus motif in nascent polypeptide chains, the first step in protein N-glycosylation. N-glycosylation occurs cotranslationally and the complex associates with the Sec61 complex at the channel-forming translocon complex that mediates protein translocation across the endoplasmic reticulum (ER). All subunits are required for a maximal enzyme activity.</text>
</comment>
<comment type="pathway">
    <text evidence="1">Protein modification; protein glycosylation.</text>
</comment>
<comment type="subunit">
    <text evidence="1">Component of the oligosaccharyltransferase (OST) complex.</text>
</comment>
<comment type="subcellular location">
    <subcellularLocation>
        <location evidence="3">Endoplasmic reticulum</location>
    </subcellularLocation>
    <subcellularLocation>
        <location evidence="1">Membrane</location>
        <topology evidence="1">Single-pass type I membrane protein</topology>
    </subcellularLocation>
</comment>
<comment type="domain">
    <text evidence="1">The cytoplasmic C-terminal domain contains a functional dilysine-retrieval motif, which is involved in the retrograde Golgi-to-ER transport of the protein.</text>
</comment>
<comment type="similarity">
    <text evidence="2">Belongs to the DDOST 48 kDa subunit family.</text>
</comment>